<dbReference type="EMBL" id="FM209186">
    <property type="protein sequence ID" value="CAW25384.1"/>
    <property type="molecule type" value="Genomic_DNA"/>
</dbReference>
<dbReference type="RefSeq" id="WP_003093747.1">
    <property type="nucleotide sequence ID" value="NC_011770.1"/>
</dbReference>
<dbReference type="SMR" id="B7V636"/>
<dbReference type="GeneID" id="77219190"/>
<dbReference type="KEGG" id="pag:PLES_06571"/>
<dbReference type="HOGENOM" id="CLU_086499_3_2_6"/>
<dbReference type="GO" id="GO:0022625">
    <property type="term" value="C:cytosolic large ribosomal subunit"/>
    <property type="evidence" value="ECO:0007669"/>
    <property type="project" value="TreeGrafter"/>
</dbReference>
<dbReference type="GO" id="GO:0003729">
    <property type="term" value="F:mRNA binding"/>
    <property type="evidence" value="ECO:0007669"/>
    <property type="project" value="TreeGrafter"/>
</dbReference>
<dbReference type="GO" id="GO:0003735">
    <property type="term" value="F:structural constituent of ribosome"/>
    <property type="evidence" value="ECO:0007669"/>
    <property type="project" value="InterPro"/>
</dbReference>
<dbReference type="GO" id="GO:0006412">
    <property type="term" value="P:translation"/>
    <property type="evidence" value="ECO:0007669"/>
    <property type="project" value="UniProtKB-UniRule"/>
</dbReference>
<dbReference type="CDD" id="cd00387">
    <property type="entry name" value="Ribosomal_L7_L12"/>
    <property type="match status" value="1"/>
</dbReference>
<dbReference type="FunFam" id="1.20.5.710:FF:000003">
    <property type="entry name" value="50S ribosomal protein L7/L12"/>
    <property type="match status" value="1"/>
</dbReference>
<dbReference type="FunFam" id="3.30.1390.10:FF:000001">
    <property type="entry name" value="50S ribosomal protein L7/L12"/>
    <property type="match status" value="1"/>
</dbReference>
<dbReference type="Gene3D" id="3.30.1390.10">
    <property type="match status" value="1"/>
</dbReference>
<dbReference type="Gene3D" id="1.20.5.710">
    <property type="entry name" value="Single helix bin"/>
    <property type="match status" value="1"/>
</dbReference>
<dbReference type="HAMAP" id="MF_00368">
    <property type="entry name" value="Ribosomal_bL12"/>
    <property type="match status" value="1"/>
</dbReference>
<dbReference type="InterPro" id="IPR000206">
    <property type="entry name" value="Ribosomal_bL12"/>
</dbReference>
<dbReference type="InterPro" id="IPR013823">
    <property type="entry name" value="Ribosomal_bL12_C"/>
</dbReference>
<dbReference type="InterPro" id="IPR014719">
    <property type="entry name" value="Ribosomal_bL12_C/ClpS-like"/>
</dbReference>
<dbReference type="InterPro" id="IPR008932">
    <property type="entry name" value="Ribosomal_bL12_oligo"/>
</dbReference>
<dbReference type="InterPro" id="IPR036235">
    <property type="entry name" value="Ribosomal_bL12_oligo_N_sf"/>
</dbReference>
<dbReference type="NCBIfam" id="TIGR00855">
    <property type="entry name" value="L12"/>
    <property type="match status" value="1"/>
</dbReference>
<dbReference type="PANTHER" id="PTHR45987">
    <property type="entry name" value="39S RIBOSOMAL PROTEIN L12"/>
    <property type="match status" value="1"/>
</dbReference>
<dbReference type="PANTHER" id="PTHR45987:SF4">
    <property type="entry name" value="LARGE RIBOSOMAL SUBUNIT PROTEIN BL12M"/>
    <property type="match status" value="1"/>
</dbReference>
<dbReference type="Pfam" id="PF00542">
    <property type="entry name" value="Ribosomal_L12"/>
    <property type="match status" value="1"/>
</dbReference>
<dbReference type="Pfam" id="PF16320">
    <property type="entry name" value="Ribosomal_L12_N"/>
    <property type="match status" value="1"/>
</dbReference>
<dbReference type="SUPFAM" id="SSF54736">
    <property type="entry name" value="ClpS-like"/>
    <property type="match status" value="1"/>
</dbReference>
<dbReference type="SUPFAM" id="SSF48300">
    <property type="entry name" value="Ribosomal protein L7/12, oligomerisation (N-terminal) domain"/>
    <property type="match status" value="1"/>
</dbReference>
<keyword id="KW-0687">Ribonucleoprotein</keyword>
<keyword id="KW-0689">Ribosomal protein</keyword>
<name>RL7_PSEA8</name>
<accession>B7V636</accession>
<feature type="chain" id="PRO_1000121474" description="Large ribosomal subunit protein bL12">
    <location>
        <begin position="1"/>
        <end position="122"/>
    </location>
</feature>
<organism>
    <name type="scientific">Pseudomonas aeruginosa (strain LESB58)</name>
    <dbReference type="NCBI Taxonomy" id="557722"/>
    <lineage>
        <taxon>Bacteria</taxon>
        <taxon>Pseudomonadati</taxon>
        <taxon>Pseudomonadota</taxon>
        <taxon>Gammaproteobacteria</taxon>
        <taxon>Pseudomonadales</taxon>
        <taxon>Pseudomonadaceae</taxon>
        <taxon>Pseudomonas</taxon>
    </lineage>
</organism>
<sequence length="122" mass="12479">MALTNEDIINAVSEMSVMQVVELIKAMEEKFGVTAAAATVAAAGPAAAAAEEQTEFTIVLAEAGDKKVNVIKVVRELTGLGLKEAKAVVDGAPGVVKEGASKEEAEAAKKALEEAGAKVELK</sequence>
<protein>
    <recommendedName>
        <fullName evidence="1">Large ribosomal subunit protein bL12</fullName>
    </recommendedName>
    <alternativeName>
        <fullName evidence="2">50S ribosomal protein L7/L12</fullName>
    </alternativeName>
</protein>
<gene>
    <name evidence="1" type="primary">rplL</name>
    <name type="ordered locus">PLES_06571</name>
</gene>
<reference key="1">
    <citation type="journal article" date="2009" name="Genome Res.">
        <title>Newly introduced genomic prophage islands are critical determinants of in vivo competitiveness in the Liverpool epidemic strain of Pseudomonas aeruginosa.</title>
        <authorList>
            <person name="Winstanley C."/>
            <person name="Langille M.G.I."/>
            <person name="Fothergill J.L."/>
            <person name="Kukavica-Ibrulj I."/>
            <person name="Paradis-Bleau C."/>
            <person name="Sanschagrin F."/>
            <person name="Thomson N.R."/>
            <person name="Winsor G.L."/>
            <person name="Quail M.A."/>
            <person name="Lennard N."/>
            <person name="Bignell A."/>
            <person name="Clarke L."/>
            <person name="Seeger K."/>
            <person name="Saunders D."/>
            <person name="Harris D."/>
            <person name="Parkhill J."/>
            <person name="Hancock R.E.W."/>
            <person name="Brinkman F.S.L."/>
            <person name="Levesque R.C."/>
        </authorList>
    </citation>
    <scope>NUCLEOTIDE SEQUENCE [LARGE SCALE GENOMIC DNA]</scope>
    <source>
        <strain>LESB58</strain>
    </source>
</reference>
<comment type="function">
    <text evidence="1">Forms part of the ribosomal stalk which helps the ribosome interact with GTP-bound translation factors. Is thus essential for accurate translation.</text>
</comment>
<comment type="subunit">
    <text evidence="1">Homodimer. Part of the ribosomal stalk of the 50S ribosomal subunit. Forms a multimeric L10(L12)X complex, where L10 forms an elongated spine to which 2 to 4 L12 dimers bind in a sequential fashion. Binds GTP-bound translation factors.</text>
</comment>
<comment type="similarity">
    <text evidence="1">Belongs to the bacterial ribosomal protein bL12 family.</text>
</comment>
<evidence type="ECO:0000255" key="1">
    <source>
        <dbReference type="HAMAP-Rule" id="MF_00368"/>
    </source>
</evidence>
<evidence type="ECO:0000305" key="2"/>
<proteinExistence type="inferred from homology"/>